<organism>
    <name type="scientific">Xanthomonas oryzae pv. oryzae (strain MAFF 311018)</name>
    <dbReference type="NCBI Taxonomy" id="342109"/>
    <lineage>
        <taxon>Bacteria</taxon>
        <taxon>Pseudomonadati</taxon>
        <taxon>Pseudomonadota</taxon>
        <taxon>Gammaproteobacteria</taxon>
        <taxon>Lysobacterales</taxon>
        <taxon>Lysobacteraceae</taxon>
        <taxon>Xanthomonas</taxon>
    </lineage>
</organism>
<dbReference type="EMBL" id="AP008229">
    <property type="protein sequence ID" value="BAE70907.1"/>
    <property type="molecule type" value="Genomic_DNA"/>
</dbReference>
<dbReference type="RefSeq" id="WP_003484969.1">
    <property type="nucleotide sequence ID" value="NC_007705.1"/>
</dbReference>
<dbReference type="SMR" id="Q2NXS0"/>
<dbReference type="GeneID" id="97512359"/>
<dbReference type="KEGG" id="xom:XOO4152"/>
<dbReference type="HOGENOM" id="CLU_086034_5_3_6"/>
<dbReference type="GO" id="GO:0033281">
    <property type="term" value="C:TAT protein transport complex"/>
    <property type="evidence" value="ECO:0007669"/>
    <property type="project" value="UniProtKB-UniRule"/>
</dbReference>
<dbReference type="GO" id="GO:0008320">
    <property type="term" value="F:protein transmembrane transporter activity"/>
    <property type="evidence" value="ECO:0007669"/>
    <property type="project" value="UniProtKB-UniRule"/>
</dbReference>
<dbReference type="GO" id="GO:0043953">
    <property type="term" value="P:protein transport by the Tat complex"/>
    <property type="evidence" value="ECO:0007669"/>
    <property type="project" value="UniProtKB-UniRule"/>
</dbReference>
<dbReference type="Gene3D" id="1.20.5.3310">
    <property type="match status" value="1"/>
</dbReference>
<dbReference type="HAMAP" id="MF_00236">
    <property type="entry name" value="TatA_E"/>
    <property type="match status" value="1"/>
</dbReference>
<dbReference type="InterPro" id="IPR003369">
    <property type="entry name" value="TatA/B/E"/>
</dbReference>
<dbReference type="InterPro" id="IPR006312">
    <property type="entry name" value="TatA/E"/>
</dbReference>
<dbReference type="NCBIfam" id="NF002813">
    <property type="entry name" value="PRK02958.1"/>
    <property type="match status" value="1"/>
</dbReference>
<dbReference type="NCBIfam" id="NF003393">
    <property type="entry name" value="PRK04561.1"/>
    <property type="match status" value="1"/>
</dbReference>
<dbReference type="NCBIfam" id="TIGR01411">
    <property type="entry name" value="tatAE"/>
    <property type="match status" value="1"/>
</dbReference>
<dbReference type="PANTHER" id="PTHR42982">
    <property type="entry name" value="SEC-INDEPENDENT PROTEIN TRANSLOCASE PROTEIN TATA"/>
    <property type="match status" value="1"/>
</dbReference>
<dbReference type="PANTHER" id="PTHR42982:SF1">
    <property type="entry name" value="SEC-INDEPENDENT PROTEIN TRANSLOCASE PROTEIN TATA"/>
    <property type="match status" value="1"/>
</dbReference>
<dbReference type="Pfam" id="PF02416">
    <property type="entry name" value="TatA_B_E"/>
    <property type="match status" value="1"/>
</dbReference>
<accession>Q2NXS0</accession>
<name>TATA_XANOM</name>
<sequence length="75" mass="8297">MGGFSIWHWLIVLVIVLLVFGTKRLTSGAKDLGSAVKEFKKGMHDDDKPAGKLGDDSRTAEQAREAQAERDRDAR</sequence>
<reference key="1">
    <citation type="journal article" date="2005" name="Jpn. Agric. Res. Q.">
        <title>Genome sequence of Xanthomonas oryzae pv. oryzae suggests contribution of large numbers of effector genes and insertion sequences to its race diversity.</title>
        <authorList>
            <person name="Ochiai H."/>
            <person name="Inoue Y."/>
            <person name="Takeya M."/>
            <person name="Sasaki A."/>
            <person name="Kaku H."/>
        </authorList>
    </citation>
    <scope>NUCLEOTIDE SEQUENCE [LARGE SCALE GENOMIC DNA]</scope>
    <source>
        <strain>MAFF 311018</strain>
    </source>
</reference>
<gene>
    <name evidence="1" type="primary">tatA</name>
    <name type="ordered locus">XOO4152</name>
</gene>
<feature type="chain" id="PRO_1000044460" description="Sec-independent protein translocase protein TatA">
    <location>
        <begin position="1"/>
        <end position="75"/>
    </location>
</feature>
<feature type="transmembrane region" description="Helical" evidence="1">
    <location>
        <begin position="1"/>
        <end position="21"/>
    </location>
</feature>
<feature type="region of interest" description="Disordered" evidence="2">
    <location>
        <begin position="41"/>
        <end position="75"/>
    </location>
</feature>
<evidence type="ECO:0000255" key="1">
    <source>
        <dbReference type="HAMAP-Rule" id="MF_00236"/>
    </source>
</evidence>
<evidence type="ECO:0000256" key="2">
    <source>
        <dbReference type="SAM" id="MobiDB-lite"/>
    </source>
</evidence>
<protein>
    <recommendedName>
        <fullName evidence="1">Sec-independent protein translocase protein TatA</fullName>
    </recommendedName>
</protein>
<proteinExistence type="inferred from homology"/>
<comment type="function">
    <text evidence="1">Part of the twin-arginine translocation (Tat) system that transports large folded proteins containing a characteristic twin-arginine motif in their signal peptide across membranes. TatA could form the protein-conducting channel of the Tat system.</text>
</comment>
<comment type="subunit">
    <text evidence="1">The Tat system comprises two distinct complexes: a TatABC complex, containing multiple copies of TatA, TatB and TatC subunits, and a separate TatA complex, containing only TatA subunits. Substrates initially bind to the TatABC complex, which probably triggers association of the separate TatA complex to form the active translocon.</text>
</comment>
<comment type="subcellular location">
    <subcellularLocation>
        <location evidence="1">Cell inner membrane</location>
        <topology evidence="1">Single-pass membrane protein</topology>
    </subcellularLocation>
</comment>
<comment type="similarity">
    <text evidence="1">Belongs to the TatA/E family.</text>
</comment>
<keyword id="KW-0997">Cell inner membrane</keyword>
<keyword id="KW-1003">Cell membrane</keyword>
<keyword id="KW-0472">Membrane</keyword>
<keyword id="KW-0653">Protein transport</keyword>
<keyword id="KW-0811">Translocation</keyword>
<keyword id="KW-0812">Transmembrane</keyword>
<keyword id="KW-1133">Transmembrane helix</keyword>
<keyword id="KW-0813">Transport</keyword>